<evidence type="ECO:0000255" key="1">
    <source>
        <dbReference type="HAMAP-Rule" id="MF_00083"/>
    </source>
</evidence>
<comment type="function">
    <text evidence="1">Hydrolyzes ribosome-free peptidyl-tRNAs (with 1 or more amino acids incorporated), which drop off the ribosome during protein synthesis, or as a result of ribosome stalling.</text>
</comment>
<comment type="function">
    <text evidence="1">Catalyzes the release of premature peptidyl moieties from peptidyl-tRNA molecules trapped in stalled 50S ribosomal subunits, and thus maintains levels of free tRNAs and 50S ribosomes.</text>
</comment>
<comment type="catalytic activity">
    <reaction evidence="1">
        <text>an N-acyl-L-alpha-aminoacyl-tRNA + H2O = an N-acyl-L-amino acid + a tRNA + H(+)</text>
        <dbReference type="Rhea" id="RHEA:54448"/>
        <dbReference type="Rhea" id="RHEA-COMP:10123"/>
        <dbReference type="Rhea" id="RHEA-COMP:13883"/>
        <dbReference type="ChEBI" id="CHEBI:15377"/>
        <dbReference type="ChEBI" id="CHEBI:15378"/>
        <dbReference type="ChEBI" id="CHEBI:59874"/>
        <dbReference type="ChEBI" id="CHEBI:78442"/>
        <dbReference type="ChEBI" id="CHEBI:138191"/>
        <dbReference type="EC" id="3.1.1.29"/>
    </reaction>
</comment>
<comment type="subunit">
    <text evidence="1">Monomer.</text>
</comment>
<comment type="subcellular location">
    <subcellularLocation>
        <location evidence="1">Cytoplasm</location>
    </subcellularLocation>
</comment>
<comment type="similarity">
    <text evidence="1">Belongs to the PTH family.</text>
</comment>
<accession>B5Y8L1</accession>
<sequence>MLLIVGLGNPGIEYEKTRHNIGWWVLDLLRTKLTGLNLRLLCYSRVYELKHELKKEVDFIVYPLTYMNNSGKAVKCLYEPRMDLVVIHDDLDLTVGKTRVRFGGSSAGHKGVSSIIDALGTDSFWRVKVGIGRPFSKQEVINYVLGEPQKNEKEVLIRAADYIADQLCLLITDRNFSRFQQNINSFNSNENN</sequence>
<feature type="chain" id="PRO_1000092931" description="Peptidyl-tRNA hydrolase">
    <location>
        <begin position="1"/>
        <end position="192"/>
    </location>
</feature>
<feature type="active site" description="Proton acceptor" evidence="1">
    <location>
        <position position="19"/>
    </location>
</feature>
<feature type="binding site" evidence="1">
    <location>
        <position position="14"/>
    </location>
    <ligand>
        <name>tRNA</name>
        <dbReference type="ChEBI" id="CHEBI:17843"/>
    </ligand>
</feature>
<feature type="binding site" evidence="1">
    <location>
        <position position="66"/>
    </location>
    <ligand>
        <name>tRNA</name>
        <dbReference type="ChEBI" id="CHEBI:17843"/>
    </ligand>
</feature>
<feature type="binding site" evidence="1">
    <location>
        <position position="68"/>
    </location>
    <ligand>
        <name>tRNA</name>
        <dbReference type="ChEBI" id="CHEBI:17843"/>
    </ligand>
</feature>
<feature type="site" description="Discriminates between blocked and unblocked aminoacyl-tRNA" evidence="1">
    <location>
        <position position="9"/>
    </location>
</feature>
<feature type="site" description="Stabilizes the basic form of H active site to accept a proton" evidence="1">
    <location>
        <position position="89"/>
    </location>
</feature>
<gene>
    <name evidence="1" type="primary">pth</name>
    <name type="ordered locus">COPRO5265_0761</name>
</gene>
<name>PTH_COPPD</name>
<keyword id="KW-0963">Cytoplasm</keyword>
<keyword id="KW-0378">Hydrolase</keyword>
<keyword id="KW-1185">Reference proteome</keyword>
<keyword id="KW-0694">RNA-binding</keyword>
<keyword id="KW-0820">tRNA-binding</keyword>
<dbReference type="EC" id="3.1.1.29" evidence="1"/>
<dbReference type="EMBL" id="CP001145">
    <property type="protein sequence ID" value="ACI18154.1"/>
    <property type="molecule type" value="Genomic_DNA"/>
</dbReference>
<dbReference type="RefSeq" id="WP_012544804.1">
    <property type="nucleotide sequence ID" value="NC_011295.1"/>
</dbReference>
<dbReference type="SMR" id="B5Y8L1"/>
<dbReference type="STRING" id="309798.COPRO5265_0761"/>
<dbReference type="KEGG" id="cpo:COPRO5265_0761"/>
<dbReference type="eggNOG" id="COG0193">
    <property type="taxonomic scope" value="Bacteria"/>
</dbReference>
<dbReference type="HOGENOM" id="CLU_062456_4_1_9"/>
<dbReference type="OrthoDB" id="9800507at2"/>
<dbReference type="Proteomes" id="UP000001732">
    <property type="component" value="Chromosome"/>
</dbReference>
<dbReference type="GO" id="GO:0005737">
    <property type="term" value="C:cytoplasm"/>
    <property type="evidence" value="ECO:0007669"/>
    <property type="project" value="UniProtKB-SubCell"/>
</dbReference>
<dbReference type="GO" id="GO:0004045">
    <property type="term" value="F:peptidyl-tRNA hydrolase activity"/>
    <property type="evidence" value="ECO:0007669"/>
    <property type="project" value="UniProtKB-UniRule"/>
</dbReference>
<dbReference type="GO" id="GO:0000049">
    <property type="term" value="F:tRNA binding"/>
    <property type="evidence" value="ECO:0007669"/>
    <property type="project" value="UniProtKB-UniRule"/>
</dbReference>
<dbReference type="GO" id="GO:0006515">
    <property type="term" value="P:protein quality control for misfolded or incompletely synthesized proteins"/>
    <property type="evidence" value="ECO:0007669"/>
    <property type="project" value="UniProtKB-UniRule"/>
</dbReference>
<dbReference type="GO" id="GO:0072344">
    <property type="term" value="P:rescue of stalled ribosome"/>
    <property type="evidence" value="ECO:0007669"/>
    <property type="project" value="UniProtKB-UniRule"/>
</dbReference>
<dbReference type="CDD" id="cd00462">
    <property type="entry name" value="PTH"/>
    <property type="match status" value="1"/>
</dbReference>
<dbReference type="Gene3D" id="3.40.50.1470">
    <property type="entry name" value="Peptidyl-tRNA hydrolase"/>
    <property type="match status" value="1"/>
</dbReference>
<dbReference type="HAMAP" id="MF_00083">
    <property type="entry name" value="Pept_tRNA_hydro_bact"/>
    <property type="match status" value="1"/>
</dbReference>
<dbReference type="InterPro" id="IPR001328">
    <property type="entry name" value="Pept_tRNA_hydro"/>
</dbReference>
<dbReference type="InterPro" id="IPR018171">
    <property type="entry name" value="Pept_tRNA_hydro_CS"/>
</dbReference>
<dbReference type="InterPro" id="IPR036416">
    <property type="entry name" value="Pept_tRNA_hydro_sf"/>
</dbReference>
<dbReference type="NCBIfam" id="TIGR00447">
    <property type="entry name" value="pth"/>
    <property type="match status" value="1"/>
</dbReference>
<dbReference type="PANTHER" id="PTHR17224">
    <property type="entry name" value="PEPTIDYL-TRNA HYDROLASE"/>
    <property type="match status" value="1"/>
</dbReference>
<dbReference type="PANTHER" id="PTHR17224:SF1">
    <property type="entry name" value="PEPTIDYL-TRNA HYDROLASE"/>
    <property type="match status" value="1"/>
</dbReference>
<dbReference type="Pfam" id="PF01195">
    <property type="entry name" value="Pept_tRNA_hydro"/>
    <property type="match status" value="1"/>
</dbReference>
<dbReference type="SUPFAM" id="SSF53178">
    <property type="entry name" value="Peptidyl-tRNA hydrolase-like"/>
    <property type="match status" value="1"/>
</dbReference>
<dbReference type="PROSITE" id="PS01195">
    <property type="entry name" value="PEPT_TRNA_HYDROL_1"/>
    <property type="match status" value="1"/>
</dbReference>
<organism>
    <name type="scientific">Coprothermobacter proteolyticus (strain ATCC 35245 / DSM 5265 / OCM 4 / BT)</name>
    <dbReference type="NCBI Taxonomy" id="309798"/>
    <lineage>
        <taxon>Bacteria</taxon>
        <taxon>Pseudomonadati</taxon>
        <taxon>Coprothermobacterota</taxon>
        <taxon>Coprothermobacteria</taxon>
        <taxon>Coprothermobacterales</taxon>
        <taxon>Coprothermobacteraceae</taxon>
        <taxon>Coprothermobacter</taxon>
    </lineage>
</organism>
<protein>
    <recommendedName>
        <fullName evidence="1">Peptidyl-tRNA hydrolase</fullName>
        <shortName evidence="1">Pth</shortName>
        <ecNumber evidence="1">3.1.1.29</ecNumber>
    </recommendedName>
</protein>
<reference key="1">
    <citation type="submission" date="2008-08" db="EMBL/GenBank/DDBJ databases">
        <title>The complete genome sequence of Coprothermobacter proteolyticus strain ATCC 5245 / DSM 5265 / BT.</title>
        <authorList>
            <person name="Dodson R.J."/>
            <person name="Durkin A.S."/>
            <person name="Wu M."/>
            <person name="Eisen J."/>
            <person name="Sutton G."/>
        </authorList>
    </citation>
    <scope>NUCLEOTIDE SEQUENCE [LARGE SCALE GENOMIC DNA]</scope>
    <source>
        <strain>ATCC 35245 / DSM 5265 / OCM 4 / BT</strain>
    </source>
</reference>
<proteinExistence type="inferred from homology"/>